<organism>
    <name type="scientific">Homo sapiens</name>
    <name type="common">Human</name>
    <dbReference type="NCBI Taxonomy" id="9606"/>
    <lineage>
        <taxon>Eukaryota</taxon>
        <taxon>Metazoa</taxon>
        <taxon>Chordata</taxon>
        <taxon>Craniata</taxon>
        <taxon>Vertebrata</taxon>
        <taxon>Euteleostomi</taxon>
        <taxon>Mammalia</taxon>
        <taxon>Eutheria</taxon>
        <taxon>Euarchontoglires</taxon>
        <taxon>Primates</taxon>
        <taxon>Haplorrhini</taxon>
        <taxon>Catarrhini</taxon>
        <taxon>Hominidae</taxon>
        <taxon>Homo</taxon>
    </lineage>
</organism>
<name>NRDE2_HUMAN</name>
<comment type="function">
    <text evidence="5 6 7">Protein of the nuclear speckles that regulates RNA degradation and export from the nucleus through its interaction with MTREX an essential factor directing various RNAs to exosomal degradation (PubMed:30842217). Changes the conformation of MTREX, precluding its association with the nuclear exosome and interaction with proteins required for its function in RNA exosomal degradation (PubMed:30842217). Negatively regulates, for instance, the degradation of mRNAs and lncRNAs by inhibiting their MTREX-mediated recruitment to nuclear exosome (PubMed:30842217). By preventing the degradation of RNAs in the nucleus, it promotes their export to the cytoplasm (PubMed:30842217). U5 snRNP-associated RNA splicing factor which is required for efficient splicing of CEP131 pre-mRNA and plays an important role in centrosome maturation, integrity and function during mitosis (PubMed:30538148). Suppresses intron retention in a subset of pre-mRNAs containing short, GC-rich introns with relatively weak 5' and 3' splice sites (PubMed:30538148). Plays a role in DNA damage response (PubMed:29902117).</text>
</comment>
<comment type="subunit">
    <text evidence="5 6 7">Interacts with MTREX; the interaction is direct and stabilizes NRDE2 (PubMed:29902117, PubMed:30538148, PubMed:30842217). Interacts with EXOSC10, EFTUD2 and EIF4A3 (PubMed:30538148).</text>
</comment>
<comment type="interaction">
    <interactant intactId="EBI-1042642">
        <id>Q9H7Z3</id>
    </interactant>
    <interactant intactId="EBI-638194">
        <id>P53365</id>
        <label>ARFIP2</label>
    </interactant>
    <organismsDiffer>false</organismsDiffer>
    <experiments>3</experiments>
</comment>
<comment type="interaction">
    <interactant intactId="EBI-1042642">
        <id>Q9H7Z3</id>
    </interactant>
    <interactant intactId="EBI-17212717">
        <id>G5E9W6</id>
        <label>CCDC183</label>
    </interactant>
    <organismsDiffer>false</organismsDiffer>
    <experiments>3</experiments>
</comment>
<comment type="interaction">
    <interactant intactId="EBI-1042642">
        <id>Q9H7Z3</id>
    </interactant>
    <interactant intactId="EBI-2558143">
        <id>Q9BT25</id>
        <label>HAUS8</label>
    </interactant>
    <organismsDiffer>false</organismsDiffer>
    <experiments>3</experiments>
</comment>
<comment type="interaction">
    <interactant intactId="EBI-1042642">
        <id>Q9H7Z3</id>
    </interactant>
    <interactant intactId="EBI-712105">
        <id>Q13352</id>
        <label>ITGB3BP</label>
    </interactant>
    <organismsDiffer>false</organismsDiffer>
    <experiments>3</experiments>
</comment>
<comment type="interaction">
    <interactant intactId="EBI-1042642">
        <id>Q9H7Z3</id>
    </interactant>
    <interactant intactId="EBI-12039345">
        <id>Q9UBR4-2</id>
        <label>LHX3</label>
    </interactant>
    <organismsDiffer>false</organismsDiffer>
    <experiments>3</experiments>
</comment>
<comment type="interaction">
    <interactant intactId="EBI-1042642">
        <id>Q9H7Z3</id>
    </interactant>
    <interactant intactId="EBI-394656">
        <id>Q9NX70</id>
        <label>MED29</label>
    </interactant>
    <organismsDiffer>false</organismsDiffer>
    <experiments>3</experiments>
</comment>
<comment type="interaction">
    <interactant intactId="EBI-1042642">
        <id>Q9H7Z3</id>
    </interactant>
    <interactant intactId="EBI-6165891">
        <id>Q14696</id>
        <label>MESD</label>
    </interactant>
    <organismsDiffer>false</organismsDiffer>
    <experiments>3</experiments>
</comment>
<comment type="interaction">
    <interactant intactId="EBI-1042642">
        <id>Q9H7Z3</id>
    </interactant>
    <interactant intactId="EBI-1504830">
        <id>Q9P2K3-2</id>
        <label>RCOR3</label>
    </interactant>
    <organismsDiffer>false</organismsDiffer>
    <experiments>3</experiments>
</comment>
<comment type="interaction">
    <interactant intactId="EBI-1042642">
        <id>Q9H7Z3</id>
    </interactant>
    <interactant intactId="EBI-742688">
        <id>Q9NZD8</id>
        <label>SPG21</label>
    </interactant>
    <organismsDiffer>false</organismsDiffer>
    <experiments>3</experiments>
</comment>
<comment type="interaction">
    <interactant intactId="EBI-1042642">
        <id>Q9H7Z3</id>
    </interactant>
    <interactant intactId="EBI-1054584">
        <id>Q9BRT2</id>
        <label>UQCC2</label>
    </interactant>
    <organismsDiffer>false</organismsDiffer>
    <experiments>3</experiments>
</comment>
<comment type="interaction">
    <interactant intactId="EBI-1042642">
        <id>Q9H7Z3</id>
    </interactant>
    <interactant intactId="EBI-12146727">
        <id>Q9UK41-2</id>
        <label>VPS28</label>
    </interactant>
    <organismsDiffer>false</organismsDiffer>
    <experiments>3</experiments>
</comment>
<comment type="subcellular location">
    <subcellularLocation>
        <location evidence="6 7">Nucleus speckle</location>
    </subcellularLocation>
    <subcellularLocation>
        <location evidence="7">Nucleus</location>
        <location evidence="7">Nucleolus</location>
    </subcellularLocation>
    <subcellularLocation>
        <location evidence="6 7">Nucleus</location>
        <location evidence="6 7">Nucleoplasm</location>
    </subcellularLocation>
    <subcellularLocation>
        <location evidence="5">Nucleus</location>
    </subcellularLocation>
</comment>
<comment type="domain">
    <text evidence="7">The MID/MTR4-interacting domain is necessary and sufficient to mediate interaction with MTREX.</text>
</comment>
<comment type="similarity">
    <text evidence="8">Belongs to the NRDE2 family.</text>
</comment>
<comment type="sequence caution" evidence="8">
    <conflict type="erroneous initiation">
        <sequence resource="EMBL-CDS" id="BAB14830"/>
    </conflict>
    <text>Truncated N-terminus.</text>
</comment>
<feature type="initiator methionine" description="Removed" evidence="11 12">
    <location>
        <position position="1"/>
    </location>
</feature>
<feature type="chain" id="PRO_0000089907" description="Nuclear exosome regulator NRDE2">
    <location>
        <begin position="2"/>
        <end position="1164"/>
    </location>
</feature>
<feature type="repeat" description="HAT 1">
    <location>
        <begin position="305"/>
        <end position="337"/>
    </location>
</feature>
<feature type="repeat" description="HAT 2">
    <location>
        <begin position="395"/>
        <end position="427"/>
    </location>
</feature>
<feature type="repeat" description="HAT 3">
    <location>
        <begin position="758"/>
        <end position="792"/>
    </location>
</feature>
<feature type="repeat" description="HAT 4">
    <location>
        <begin position="978"/>
        <end position="1010"/>
    </location>
</feature>
<feature type="repeat" description="HAT 5">
    <location>
        <begin position="1067"/>
        <end position="1101"/>
    </location>
</feature>
<feature type="region of interest" description="Disordered" evidence="2">
    <location>
        <begin position="1"/>
        <end position="25"/>
    </location>
</feature>
<feature type="region of interest" description="Disordered" evidence="2">
    <location>
        <begin position="39"/>
        <end position="149"/>
    </location>
</feature>
<feature type="region of interest" description="MID/MTR4-interacting domain" evidence="7">
    <location>
        <begin position="163"/>
        <end position="266"/>
    </location>
</feature>
<feature type="region of interest" description="Disordered" evidence="2">
    <location>
        <begin position="279"/>
        <end position="305"/>
    </location>
</feature>
<feature type="coiled-coil region" evidence="1">
    <location>
        <begin position="61"/>
        <end position="383"/>
    </location>
</feature>
<feature type="compositionally biased region" description="Basic and acidic residues" evidence="2">
    <location>
        <begin position="61"/>
        <end position="73"/>
    </location>
</feature>
<feature type="compositionally biased region" description="Basic residues" evidence="2">
    <location>
        <begin position="74"/>
        <end position="103"/>
    </location>
</feature>
<feature type="compositionally biased region" description="Basic and acidic residues" evidence="2">
    <location>
        <begin position="110"/>
        <end position="133"/>
    </location>
</feature>
<feature type="modified residue" description="N-acetylalanine" evidence="11 12">
    <location>
        <position position="2"/>
    </location>
</feature>
<feature type="sequence variant" id="VAR_057813" description="In dbSNP:rs7140914.">
    <original>C</original>
    <variation>F</variation>
    <location>
        <position position="32"/>
    </location>
</feature>
<feature type="sequence variant" id="VAR_062239" description="In dbSNP:rs59039343.">
    <original>E</original>
    <variation>K</variation>
    <location>
        <position position="928"/>
    </location>
</feature>
<feature type="sequence variant" id="VAR_060343" description="In dbSNP:rs3737035." evidence="3 4">
    <original>N</original>
    <variation>S</variation>
    <location>
        <position position="1118"/>
    </location>
</feature>
<feature type="mutagenesis site" description="Loss of interaction with MTREX associated with decreased RNAs stability; when associated with R-166; A-187 and E-189." evidence="7">
    <original>F</original>
    <variation>A</variation>
    <location>
        <position position="163"/>
    </location>
</feature>
<feature type="mutagenesis site" description="Loss of interaction with MTREX associated with decreased RNAs stability; when associated with A-163; A-187 and E-189." evidence="7">
    <original>D</original>
    <variation>R</variation>
    <location>
        <position position="166"/>
    </location>
</feature>
<feature type="mutagenesis site" description="Loss of interaction with MTREX associated with decreased RNAs stability; when associated with A-163; R-166 and E-189." evidence="7">
    <original>Y</original>
    <variation>A</variation>
    <location>
        <position position="187"/>
    </location>
</feature>
<feature type="mutagenesis site" description="Loss of interaction with MTREX associated with decreased RNAs stability; when associated with A-163; R-166 and A-187." evidence="7">
    <original>R</original>
    <variation>E</variation>
    <location>
        <position position="189"/>
    </location>
</feature>
<feature type="sequence conflict" description="In Ref. 1; BAA91404." evidence="8" ref="1">
    <original>E</original>
    <variation>G</variation>
    <location>
        <position position="117"/>
    </location>
</feature>
<feature type="sequence conflict" description="In Ref. 1; BAA91404." evidence="8" ref="1">
    <original>R</original>
    <variation>G</variation>
    <location>
        <position position="357"/>
    </location>
</feature>
<feature type="sequence conflict" description="In Ref. 1; BAB14830." evidence="8" ref="1">
    <original>D</original>
    <variation>G</variation>
    <location>
        <position position="694"/>
    </location>
</feature>
<feature type="helix" evidence="13">
    <location>
        <begin position="172"/>
        <end position="176"/>
    </location>
</feature>
<feature type="strand" evidence="13">
    <location>
        <begin position="189"/>
        <end position="193"/>
    </location>
</feature>
<feature type="helix" evidence="13">
    <location>
        <begin position="218"/>
        <end position="225"/>
    </location>
</feature>
<feature type="strand" evidence="13">
    <location>
        <begin position="252"/>
        <end position="255"/>
    </location>
</feature>
<dbReference type="EMBL" id="AK000870">
    <property type="protein sequence ID" value="BAA91404.1"/>
    <property type="molecule type" value="mRNA"/>
</dbReference>
<dbReference type="EMBL" id="AK024113">
    <property type="protein sequence ID" value="BAB14830.1"/>
    <property type="status" value="ALT_INIT"/>
    <property type="molecule type" value="mRNA"/>
</dbReference>
<dbReference type="EMBL" id="AK294958">
    <property type="protein sequence ID" value="BAG58032.1"/>
    <property type="molecule type" value="mRNA"/>
</dbReference>
<dbReference type="EMBL" id="AL161662">
    <property type="status" value="NOT_ANNOTATED_CDS"/>
    <property type="molecule type" value="Genomic_DNA"/>
</dbReference>
<dbReference type="EMBL" id="BC098568">
    <property type="protein sequence ID" value="AAH98568.1"/>
    <property type="molecule type" value="mRNA"/>
</dbReference>
<dbReference type="CCDS" id="CCDS9890.1"/>
<dbReference type="RefSeq" id="NP_060440.2">
    <property type="nucleotide sequence ID" value="NM_017970.3"/>
</dbReference>
<dbReference type="PDB" id="6IEH">
    <property type="method" value="X-ray"/>
    <property type="resolution" value="2.89 A"/>
    <property type="chains" value="A=163-266"/>
</dbReference>
<dbReference type="PDBsum" id="6IEH"/>
<dbReference type="SMR" id="Q9H7Z3"/>
<dbReference type="BioGRID" id="120373">
    <property type="interactions" value="33"/>
</dbReference>
<dbReference type="FunCoup" id="Q9H7Z3">
    <property type="interactions" value="3321"/>
</dbReference>
<dbReference type="IntAct" id="Q9H7Z3">
    <property type="interactions" value="18"/>
</dbReference>
<dbReference type="STRING" id="9606.ENSP00000346335"/>
<dbReference type="GlyGen" id="Q9H7Z3">
    <property type="glycosylation" value="2 sites, 1 O-linked glycan (1 site)"/>
</dbReference>
<dbReference type="iPTMnet" id="Q9H7Z3"/>
<dbReference type="MetOSite" id="Q9H7Z3"/>
<dbReference type="PhosphoSitePlus" id="Q9H7Z3"/>
<dbReference type="BioMuta" id="NRDE2"/>
<dbReference type="DMDM" id="296439394"/>
<dbReference type="jPOST" id="Q9H7Z3"/>
<dbReference type="MassIVE" id="Q9H7Z3"/>
<dbReference type="PaxDb" id="9606-ENSP00000346335"/>
<dbReference type="PeptideAtlas" id="Q9H7Z3"/>
<dbReference type="ProteomicsDB" id="81161"/>
<dbReference type="Pumba" id="Q9H7Z3"/>
<dbReference type="Antibodypedia" id="26518">
    <property type="antibodies" value="24 antibodies from 11 providers"/>
</dbReference>
<dbReference type="DNASU" id="55051"/>
<dbReference type="Ensembl" id="ENST00000354366.8">
    <property type="protein sequence ID" value="ENSP00000346335.3"/>
    <property type="gene ID" value="ENSG00000119720.18"/>
</dbReference>
<dbReference type="GeneID" id="55051"/>
<dbReference type="KEGG" id="hsa:55051"/>
<dbReference type="MANE-Select" id="ENST00000354366.8">
    <property type="protein sequence ID" value="ENSP00000346335.3"/>
    <property type="RefSeq nucleotide sequence ID" value="NM_017970.4"/>
    <property type="RefSeq protein sequence ID" value="NP_060440.2"/>
</dbReference>
<dbReference type="UCSC" id="uc001xyi.3">
    <property type="organism name" value="human"/>
</dbReference>
<dbReference type="AGR" id="HGNC:20186"/>
<dbReference type="CTD" id="55051"/>
<dbReference type="DisGeNET" id="55051"/>
<dbReference type="GeneCards" id="NRDE2"/>
<dbReference type="HGNC" id="HGNC:20186">
    <property type="gene designation" value="NRDE2"/>
</dbReference>
<dbReference type="HPA" id="ENSG00000119720">
    <property type="expression patterns" value="Low tissue specificity"/>
</dbReference>
<dbReference type="MalaCards" id="NRDE2"/>
<dbReference type="MIM" id="618631">
    <property type="type" value="gene"/>
</dbReference>
<dbReference type="neXtProt" id="NX_Q9H7Z3"/>
<dbReference type="OpenTargets" id="ENSG00000119720"/>
<dbReference type="PharmGKB" id="PA134926790"/>
<dbReference type="VEuPathDB" id="HostDB:ENSG00000119720"/>
<dbReference type="eggNOG" id="KOG1972">
    <property type="taxonomic scope" value="Eukaryota"/>
</dbReference>
<dbReference type="GeneTree" id="ENSGT00390000005524"/>
<dbReference type="HOGENOM" id="CLU_007550_1_0_1"/>
<dbReference type="InParanoid" id="Q9H7Z3"/>
<dbReference type="OMA" id="MRDKELH"/>
<dbReference type="OrthoDB" id="297219at2759"/>
<dbReference type="PAN-GO" id="Q9H7Z3">
    <property type="GO annotations" value="2 GO annotations based on evolutionary models"/>
</dbReference>
<dbReference type="PhylomeDB" id="Q9H7Z3"/>
<dbReference type="TreeFam" id="TF323791"/>
<dbReference type="PathwayCommons" id="Q9H7Z3"/>
<dbReference type="SignaLink" id="Q9H7Z3"/>
<dbReference type="BioGRID-ORCS" id="55051">
    <property type="hits" value="779 hits in 1160 CRISPR screens"/>
</dbReference>
<dbReference type="ChiTaRS" id="NRDE2">
    <property type="organism name" value="human"/>
</dbReference>
<dbReference type="GenomeRNAi" id="55051"/>
<dbReference type="Pharos" id="Q9H7Z3">
    <property type="development level" value="Tdark"/>
</dbReference>
<dbReference type="PRO" id="PR:Q9H7Z3"/>
<dbReference type="Proteomes" id="UP000005640">
    <property type="component" value="Chromosome 14"/>
</dbReference>
<dbReference type="RNAct" id="Q9H7Z3">
    <property type="molecule type" value="protein"/>
</dbReference>
<dbReference type="Bgee" id="ENSG00000119720">
    <property type="expression patterns" value="Expressed in sural nerve and 153 other cell types or tissues"/>
</dbReference>
<dbReference type="ExpressionAtlas" id="Q9H7Z3">
    <property type="expression patterns" value="baseline and differential"/>
</dbReference>
<dbReference type="GO" id="GO:0016607">
    <property type="term" value="C:nuclear speck"/>
    <property type="evidence" value="ECO:0000314"/>
    <property type="project" value="UniProtKB"/>
</dbReference>
<dbReference type="GO" id="GO:0005730">
    <property type="term" value="C:nucleolus"/>
    <property type="evidence" value="ECO:0000314"/>
    <property type="project" value="UniProtKB"/>
</dbReference>
<dbReference type="GO" id="GO:0005654">
    <property type="term" value="C:nucleoplasm"/>
    <property type="evidence" value="ECO:0000314"/>
    <property type="project" value="UniProtKB"/>
</dbReference>
<dbReference type="GO" id="GO:0005634">
    <property type="term" value="C:nucleus"/>
    <property type="evidence" value="ECO:0000314"/>
    <property type="project" value="UniProtKB"/>
</dbReference>
<dbReference type="GO" id="GO:0051301">
    <property type="term" value="P:cell division"/>
    <property type="evidence" value="ECO:0007669"/>
    <property type="project" value="UniProtKB-KW"/>
</dbReference>
<dbReference type="GO" id="GO:0006974">
    <property type="term" value="P:DNA damage response"/>
    <property type="evidence" value="ECO:0000315"/>
    <property type="project" value="UniProtKB"/>
</dbReference>
<dbReference type="GO" id="GO:0000278">
    <property type="term" value="P:mitotic cell cycle"/>
    <property type="evidence" value="ECO:0000315"/>
    <property type="project" value="UniProtKB"/>
</dbReference>
<dbReference type="GO" id="GO:0006397">
    <property type="term" value="P:mRNA processing"/>
    <property type="evidence" value="ECO:0007669"/>
    <property type="project" value="UniProtKB-KW"/>
</dbReference>
<dbReference type="GO" id="GO:0048255">
    <property type="term" value="P:mRNA stabilization"/>
    <property type="evidence" value="ECO:0000315"/>
    <property type="project" value="UniProtKB"/>
</dbReference>
<dbReference type="GO" id="GO:1902369">
    <property type="term" value="P:negative regulation of RNA catabolic process"/>
    <property type="evidence" value="ECO:0000318"/>
    <property type="project" value="GO_Central"/>
</dbReference>
<dbReference type="GO" id="GO:0046833">
    <property type="term" value="P:positive regulation of RNA export from nucleus"/>
    <property type="evidence" value="ECO:0000315"/>
    <property type="project" value="UniProtKB"/>
</dbReference>
<dbReference type="GO" id="GO:0031048">
    <property type="term" value="P:regulatory ncRNA-mediated heterochromatin formation"/>
    <property type="evidence" value="ECO:0000318"/>
    <property type="project" value="GO_Central"/>
</dbReference>
<dbReference type="GO" id="GO:0008380">
    <property type="term" value="P:RNA splicing"/>
    <property type="evidence" value="ECO:0000315"/>
    <property type="project" value="UniProtKB"/>
</dbReference>
<dbReference type="CDD" id="cd22200">
    <property type="entry name" value="NRDE2_MID"/>
    <property type="match status" value="1"/>
</dbReference>
<dbReference type="FunFam" id="1.25.40.10:FF:003653">
    <property type="entry name" value="NRDE-2, necessary for RNA interference, domain containing"/>
    <property type="match status" value="1"/>
</dbReference>
<dbReference type="FunFam" id="1.25.40.10:FF:000185">
    <property type="entry name" value="NRDE-2, necessary for RNA interference, domain-containing"/>
    <property type="match status" value="1"/>
</dbReference>
<dbReference type="Gene3D" id="1.25.40.10">
    <property type="entry name" value="Tetratricopeptide repeat domain"/>
    <property type="match status" value="2"/>
</dbReference>
<dbReference type="InterPro" id="IPR013633">
    <property type="entry name" value="NRDE-2"/>
</dbReference>
<dbReference type="InterPro" id="IPR011990">
    <property type="entry name" value="TPR-like_helical_dom_sf"/>
</dbReference>
<dbReference type="PANTHER" id="PTHR13471:SF0">
    <property type="entry name" value="NUCLEAR EXOSOME REGULATOR NRDE2"/>
    <property type="match status" value="1"/>
</dbReference>
<dbReference type="PANTHER" id="PTHR13471">
    <property type="entry name" value="TETRATRICOPEPTIDE-LIKE HELICAL"/>
    <property type="match status" value="1"/>
</dbReference>
<dbReference type="Pfam" id="PF08424">
    <property type="entry name" value="NRDE-2"/>
    <property type="match status" value="1"/>
</dbReference>
<dbReference type="SUPFAM" id="SSF48452">
    <property type="entry name" value="TPR-like"/>
    <property type="match status" value="1"/>
</dbReference>
<proteinExistence type="evidence at protein level"/>
<gene>
    <name evidence="10" type="primary">NRDE2</name>
    <name evidence="10" type="synonym">C14orf102</name>
</gene>
<keyword id="KW-0002">3D-structure</keyword>
<keyword id="KW-0007">Acetylation</keyword>
<keyword id="KW-0131">Cell cycle</keyword>
<keyword id="KW-0132">Cell division</keyword>
<keyword id="KW-0175">Coiled coil</keyword>
<keyword id="KW-0227">DNA damage</keyword>
<keyword id="KW-0498">Mitosis</keyword>
<keyword id="KW-0507">mRNA processing</keyword>
<keyword id="KW-0508">mRNA splicing</keyword>
<keyword id="KW-0539">Nucleus</keyword>
<keyword id="KW-1267">Proteomics identification</keyword>
<keyword id="KW-1185">Reference proteome</keyword>
<keyword id="KW-0677">Repeat</keyword>
<sequence length="1164" mass="132673">MALFPAFAGLSEAPDGGSSRKELDWLSNPSFCVGSITSLSQQTEAAPAHVSEGLPLTRSHLKSESSDESDTNKKLKQTSRKKKKEKKKKRKHQHHKKTKRKHGPSSSSRSETDTDSEKDKPSRGVGGSKKESEEPNQGNNAAADTGHRFVWLEDIQAVTGETFRTDKKPDPANWEYKSLYRGDIARYKRKGDSCLGINPKKQCISWEGTSTEKKHSRKQVERYFTKKSVGLMNIDGVAISSKTEPPSSEPISFIPVKDLEDAAPVTTWLNPLGIYDQSTTHWLQGQGPPEQESKQPDAQPDSESAALKAKVEEFNRRVRENPRDTQLWMAFVAFQDEVMKSPGLYAIEEGEQEKRKRSLKLILEKKLAILERAIESNQSSVDLKLAKLKLCTEFWEPSTLVKEWQKLIFLHPNNTALWQKYLLFCQSQFSTFSISKIHSLYGKCLSTLSAVKDGSILSHPALPGTEEAMFALFLQQCHFLRQAGHSEKAISLFQAMVDFTFFKPDSVKDLPTKGQVEFFEPFWDSGEPRAGEKGARGWKAWMHQQERGGWVVINPDEDDDEPEEDDQEIKDKTLPRWQIWLAAERSRDQRHWRPWRPDKTKKQTEEDCEDPERQVLFDDIGQSLIRLSSHDLQFQLVEAFLQFLGVPSGFTPPASCLYLAMDENSIFDNGLYDEKPLTFFNPLFSGASCVGRMDRLGYPRWTRGQNREGEEFIRNVFHLVMPLFSGKEKSQLCFSWLQYEIAKVIWCLHTKNKKRLKSQGKNCKKLAKNLLKEPENCNNFCLWKQYAHLEWLLGNTEDARKVFDTALGMAGSRELKDSDLCELSLLYAELEVELSPEVRRAATARAVHILTKLTESSPYGPYTGQVLAVHILKARKAYEHALQDCLGDSCVSNPAPTDSCSRLISLAKCFMLFQYLTIGIDAAVQIYEQVFAKLNSSVFPEGSGEGDSASSQSWTSVLEAITLMHTSLLRFHMKVSVYPLAPLREALSQALKLYPGNQVLWRSYVQIQNKSHSASKTRRFFDTITRSAKPLEPWLFAIEAEKLRKRLVETVQRLDGREIHATIPETGLMHRIQALFENAMRSDSGSQCPLLWRMYLNFLVSLGNKERSKGVFYKALQNCPWAKVLYLDAVEYFPDEMQEILDLMTEKELRVRLPLEELELLLED</sequence>
<protein>
    <recommendedName>
        <fullName evidence="9">Nuclear exosome regulator NRDE2</fullName>
    </recommendedName>
    <alternativeName>
        <fullName evidence="8">Protein NRDE2 homolog</fullName>
    </alternativeName>
</protein>
<evidence type="ECO:0000255" key="1"/>
<evidence type="ECO:0000256" key="2">
    <source>
        <dbReference type="SAM" id="MobiDB-lite"/>
    </source>
</evidence>
<evidence type="ECO:0000269" key="3">
    <source>
    </source>
</evidence>
<evidence type="ECO:0000269" key="4">
    <source>
    </source>
</evidence>
<evidence type="ECO:0000269" key="5">
    <source>
    </source>
</evidence>
<evidence type="ECO:0000269" key="6">
    <source>
    </source>
</evidence>
<evidence type="ECO:0000269" key="7">
    <source>
    </source>
</evidence>
<evidence type="ECO:0000305" key="8"/>
<evidence type="ECO:0000305" key="9">
    <source>
    </source>
</evidence>
<evidence type="ECO:0000312" key="10">
    <source>
        <dbReference type="HGNC" id="HGNC:20186"/>
    </source>
</evidence>
<evidence type="ECO:0007744" key="11">
    <source>
    </source>
</evidence>
<evidence type="ECO:0007744" key="12">
    <source>
    </source>
</evidence>
<evidence type="ECO:0007829" key="13">
    <source>
        <dbReference type="PDB" id="6IEH"/>
    </source>
</evidence>
<reference key="1">
    <citation type="journal article" date="2004" name="Nat. Genet.">
        <title>Complete sequencing and characterization of 21,243 full-length human cDNAs.</title>
        <authorList>
            <person name="Ota T."/>
            <person name="Suzuki Y."/>
            <person name="Nishikawa T."/>
            <person name="Otsuki T."/>
            <person name="Sugiyama T."/>
            <person name="Irie R."/>
            <person name="Wakamatsu A."/>
            <person name="Hayashi K."/>
            <person name="Sato H."/>
            <person name="Nagai K."/>
            <person name="Kimura K."/>
            <person name="Makita H."/>
            <person name="Sekine M."/>
            <person name="Obayashi M."/>
            <person name="Nishi T."/>
            <person name="Shibahara T."/>
            <person name="Tanaka T."/>
            <person name="Ishii S."/>
            <person name="Yamamoto J."/>
            <person name="Saito K."/>
            <person name="Kawai Y."/>
            <person name="Isono Y."/>
            <person name="Nakamura Y."/>
            <person name="Nagahari K."/>
            <person name="Murakami K."/>
            <person name="Yasuda T."/>
            <person name="Iwayanagi T."/>
            <person name="Wagatsuma M."/>
            <person name="Shiratori A."/>
            <person name="Sudo H."/>
            <person name="Hosoiri T."/>
            <person name="Kaku Y."/>
            <person name="Kodaira H."/>
            <person name="Kondo H."/>
            <person name="Sugawara M."/>
            <person name="Takahashi M."/>
            <person name="Kanda K."/>
            <person name="Yokoi T."/>
            <person name="Furuya T."/>
            <person name="Kikkawa E."/>
            <person name="Omura Y."/>
            <person name="Abe K."/>
            <person name="Kamihara K."/>
            <person name="Katsuta N."/>
            <person name="Sato K."/>
            <person name="Tanikawa M."/>
            <person name="Yamazaki M."/>
            <person name="Ninomiya K."/>
            <person name="Ishibashi T."/>
            <person name="Yamashita H."/>
            <person name="Murakawa K."/>
            <person name="Fujimori K."/>
            <person name="Tanai H."/>
            <person name="Kimata M."/>
            <person name="Watanabe M."/>
            <person name="Hiraoka S."/>
            <person name="Chiba Y."/>
            <person name="Ishida S."/>
            <person name="Ono Y."/>
            <person name="Takiguchi S."/>
            <person name="Watanabe S."/>
            <person name="Yosida M."/>
            <person name="Hotuta T."/>
            <person name="Kusano J."/>
            <person name="Kanehori K."/>
            <person name="Takahashi-Fujii A."/>
            <person name="Hara H."/>
            <person name="Tanase T.-O."/>
            <person name="Nomura Y."/>
            <person name="Togiya S."/>
            <person name="Komai F."/>
            <person name="Hara R."/>
            <person name="Takeuchi K."/>
            <person name="Arita M."/>
            <person name="Imose N."/>
            <person name="Musashino K."/>
            <person name="Yuuki H."/>
            <person name="Oshima A."/>
            <person name="Sasaki N."/>
            <person name="Aotsuka S."/>
            <person name="Yoshikawa Y."/>
            <person name="Matsunawa H."/>
            <person name="Ichihara T."/>
            <person name="Shiohata N."/>
            <person name="Sano S."/>
            <person name="Moriya S."/>
            <person name="Momiyama H."/>
            <person name="Satoh N."/>
            <person name="Takami S."/>
            <person name="Terashima Y."/>
            <person name="Suzuki O."/>
            <person name="Nakagawa S."/>
            <person name="Senoh A."/>
            <person name="Mizoguchi H."/>
            <person name="Goto Y."/>
            <person name="Shimizu F."/>
            <person name="Wakebe H."/>
            <person name="Hishigaki H."/>
            <person name="Watanabe T."/>
            <person name="Sugiyama A."/>
            <person name="Takemoto M."/>
            <person name="Kawakami B."/>
            <person name="Yamazaki M."/>
            <person name="Watanabe K."/>
            <person name="Kumagai A."/>
            <person name="Itakura S."/>
            <person name="Fukuzumi Y."/>
            <person name="Fujimori Y."/>
            <person name="Komiyama M."/>
            <person name="Tashiro H."/>
            <person name="Tanigami A."/>
            <person name="Fujiwara T."/>
            <person name="Ono T."/>
            <person name="Yamada K."/>
            <person name="Fujii Y."/>
            <person name="Ozaki K."/>
            <person name="Hirao M."/>
            <person name="Ohmori Y."/>
            <person name="Kawabata A."/>
            <person name="Hikiji T."/>
            <person name="Kobatake N."/>
            <person name="Inagaki H."/>
            <person name="Ikema Y."/>
            <person name="Okamoto S."/>
            <person name="Okitani R."/>
            <person name="Kawakami T."/>
            <person name="Noguchi S."/>
            <person name="Itoh T."/>
            <person name="Shigeta K."/>
            <person name="Senba T."/>
            <person name="Matsumura K."/>
            <person name="Nakajima Y."/>
            <person name="Mizuno T."/>
            <person name="Morinaga M."/>
            <person name="Sasaki M."/>
            <person name="Togashi T."/>
            <person name="Oyama M."/>
            <person name="Hata H."/>
            <person name="Watanabe M."/>
            <person name="Komatsu T."/>
            <person name="Mizushima-Sugano J."/>
            <person name="Satoh T."/>
            <person name="Shirai Y."/>
            <person name="Takahashi Y."/>
            <person name="Nakagawa K."/>
            <person name="Okumura K."/>
            <person name="Nagase T."/>
            <person name="Nomura N."/>
            <person name="Kikuchi H."/>
            <person name="Masuho Y."/>
            <person name="Yamashita R."/>
            <person name="Nakai K."/>
            <person name="Yada T."/>
            <person name="Nakamura Y."/>
            <person name="Ohara O."/>
            <person name="Isogai T."/>
            <person name="Sugano S."/>
        </authorList>
    </citation>
    <scope>NUCLEOTIDE SEQUENCE [LARGE SCALE MRNA]</scope>
    <scope>VARIANT SER-1118</scope>
    <source>
        <tissue>Brain</tissue>
        <tissue>Embryo</tissue>
    </source>
</reference>
<reference key="2">
    <citation type="journal article" date="2003" name="Nature">
        <title>The DNA sequence and analysis of human chromosome 14.</title>
        <authorList>
            <person name="Heilig R."/>
            <person name="Eckenberg R."/>
            <person name="Petit J.-L."/>
            <person name="Fonknechten N."/>
            <person name="Da Silva C."/>
            <person name="Cattolico L."/>
            <person name="Levy M."/>
            <person name="Barbe V."/>
            <person name="De Berardinis V."/>
            <person name="Ureta-Vidal A."/>
            <person name="Pelletier E."/>
            <person name="Vico V."/>
            <person name="Anthouard V."/>
            <person name="Rowen L."/>
            <person name="Madan A."/>
            <person name="Qin S."/>
            <person name="Sun H."/>
            <person name="Du H."/>
            <person name="Pepin K."/>
            <person name="Artiguenave F."/>
            <person name="Robert C."/>
            <person name="Cruaud C."/>
            <person name="Bruels T."/>
            <person name="Jaillon O."/>
            <person name="Friedlander L."/>
            <person name="Samson G."/>
            <person name="Brottier P."/>
            <person name="Cure S."/>
            <person name="Segurens B."/>
            <person name="Aniere F."/>
            <person name="Samain S."/>
            <person name="Crespeau H."/>
            <person name="Abbasi N."/>
            <person name="Aiach N."/>
            <person name="Boscus D."/>
            <person name="Dickhoff R."/>
            <person name="Dors M."/>
            <person name="Dubois I."/>
            <person name="Friedman C."/>
            <person name="Gouyvenoux M."/>
            <person name="James R."/>
            <person name="Madan A."/>
            <person name="Mairey-Estrada B."/>
            <person name="Mangenot S."/>
            <person name="Martins N."/>
            <person name="Menard M."/>
            <person name="Oztas S."/>
            <person name="Ratcliffe A."/>
            <person name="Shaffer T."/>
            <person name="Trask B."/>
            <person name="Vacherie B."/>
            <person name="Bellemere C."/>
            <person name="Belser C."/>
            <person name="Besnard-Gonnet M."/>
            <person name="Bartol-Mavel D."/>
            <person name="Boutard M."/>
            <person name="Briez-Silla S."/>
            <person name="Combette S."/>
            <person name="Dufosse-Laurent V."/>
            <person name="Ferron C."/>
            <person name="Lechaplais C."/>
            <person name="Louesse C."/>
            <person name="Muselet D."/>
            <person name="Magdelenat G."/>
            <person name="Pateau E."/>
            <person name="Petit E."/>
            <person name="Sirvain-Trukniewicz P."/>
            <person name="Trybou A."/>
            <person name="Vega-Czarny N."/>
            <person name="Bataille E."/>
            <person name="Bluet E."/>
            <person name="Bordelais I."/>
            <person name="Dubois M."/>
            <person name="Dumont C."/>
            <person name="Guerin T."/>
            <person name="Haffray S."/>
            <person name="Hammadi R."/>
            <person name="Muanga J."/>
            <person name="Pellouin V."/>
            <person name="Robert D."/>
            <person name="Wunderle E."/>
            <person name="Gauguet G."/>
            <person name="Roy A."/>
            <person name="Sainte-Marthe L."/>
            <person name="Verdier J."/>
            <person name="Verdier-Discala C."/>
            <person name="Hillier L.W."/>
            <person name="Fulton L."/>
            <person name="McPherson J."/>
            <person name="Matsuda F."/>
            <person name="Wilson R."/>
            <person name="Scarpelli C."/>
            <person name="Gyapay G."/>
            <person name="Wincker P."/>
            <person name="Saurin W."/>
            <person name="Quetier F."/>
            <person name="Waterston R."/>
            <person name="Hood L."/>
            <person name="Weissenbach J."/>
        </authorList>
    </citation>
    <scope>NUCLEOTIDE SEQUENCE [LARGE SCALE GENOMIC DNA]</scope>
</reference>
<reference key="3">
    <citation type="journal article" date="2004" name="Genome Res.">
        <title>The status, quality, and expansion of the NIH full-length cDNA project: the Mammalian Gene Collection (MGC).</title>
        <authorList>
            <consortium name="The MGC Project Team"/>
        </authorList>
    </citation>
    <scope>NUCLEOTIDE SEQUENCE [LARGE SCALE MRNA]</scope>
    <scope>VARIANT SER-1118</scope>
    <source>
        <tissue>Chondrosarcoma</tissue>
    </source>
</reference>
<reference key="4">
    <citation type="journal article" date="2011" name="BMC Syst. Biol.">
        <title>Initial characterization of the human central proteome.</title>
        <authorList>
            <person name="Burkard T.R."/>
            <person name="Planyavsky M."/>
            <person name="Kaupe I."/>
            <person name="Breitwieser F.P."/>
            <person name="Buerckstuemmer T."/>
            <person name="Bennett K.L."/>
            <person name="Superti-Furga G."/>
            <person name="Colinge J."/>
        </authorList>
    </citation>
    <scope>IDENTIFICATION BY MASS SPECTROMETRY [LARGE SCALE ANALYSIS]</scope>
</reference>
<reference key="5">
    <citation type="journal article" date="2012" name="Mol. Cell. Proteomics">
        <title>Comparative large-scale characterisation of plant vs. mammal proteins reveals similar and idiosyncratic N-alpha acetylation features.</title>
        <authorList>
            <person name="Bienvenut W.V."/>
            <person name="Sumpton D."/>
            <person name="Martinez A."/>
            <person name="Lilla S."/>
            <person name="Espagne C."/>
            <person name="Meinnel T."/>
            <person name="Giglione C."/>
        </authorList>
    </citation>
    <scope>ACETYLATION [LARGE SCALE ANALYSIS] AT ALA-2</scope>
    <scope>CLEAVAGE OF INITIATOR METHIONINE [LARGE SCALE ANALYSIS]</scope>
    <scope>IDENTIFICATION BY MASS SPECTROMETRY [LARGE SCALE ANALYSIS]</scope>
</reference>
<reference key="6">
    <citation type="journal article" date="2012" name="Proc. Natl. Acad. Sci. U.S.A.">
        <title>N-terminal acetylome analyses and functional insights of the N-terminal acetyltransferase NatB.</title>
        <authorList>
            <person name="Van Damme P."/>
            <person name="Lasa M."/>
            <person name="Polevoda B."/>
            <person name="Gazquez C."/>
            <person name="Elosegui-Artola A."/>
            <person name="Kim D.S."/>
            <person name="De Juan-Pardo E."/>
            <person name="Demeyer K."/>
            <person name="Hole K."/>
            <person name="Larrea E."/>
            <person name="Timmerman E."/>
            <person name="Prieto J."/>
            <person name="Arnesen T."/>
            <person name="Sherman F."/>
            <person name="Gevaert K."/>
            <person name="Aldabe R."/>
        </authorList>
    </citation>
    <scope>ACETYLATION [LARGE SCALE ANALYSIS] AT ALA-2</scope>
    <scope>CLEAVAGE OF INITIATOR METHIONINE [LARGE SCALE ANALYSIS]</scope>
    <scope>IDENTIFICATION BY MASS SPECTROMETRY [LARGE SCALE ANALYSIS]</scope>
</reference>
<reference key="7">
    <citation type="journal article" date="2018" name="RNA Biol.">
        <title>NRDE-2, the human homolog of fission yeast Nrl1, prevents DNA damage accumulation in human cells.</title>
        <authorList>
            <person name="Richard P."/>
            <person name="Ogami K."/>
            <person name="Chen Y."/>
            <person name="Feng S."/>
            <person name="Moresco J.J."/>
            <person name="Yates J.R. III"/>
            <person name="Manley J.L."/>
        </authorList>
    </citation>
    <scope>FUNCTION</scope>
    <scope>SUBCELLULAR LOCATION</scope>
    <scope>INTERACTION WITH MTREX</scope>
</reference>
<reference key="8">
    <citation type="journal article" date="2019" name="RNA">
        <title>Human nuclear RNAi-defective 2 (NRDE2) is an essential RNA splicing factor.</title>
        <authorList>
            <person name="Jiao A.L."/>
            <person name="Perales R."/>
            <person name="Umbreit N.T."/>
            <person name="Haswell J.R."/>
            <person name="Piper M.E."/>
            <person name="Adams B.D."/>
            <person name="Pellman D."/>
            <person name="Kennedy S."/>
            <person name="Slack F.J."/>
        </authorList>
    </citation>
    <scope>FUNCTION</scope>
    <scope>SUBCELLULAR LOCATION</scope>
    <scope>INTERACTION WITH MTREX; EXOSC10; EFTUD2 AND EIF4A3</scope>
</reference>
<reference key="9">
    <citation type="journal article" date="2019" name="Genes Dev.">
        <title>NRDE2 negatively regulates exosome functions by inhibiting MTR4 recruitment and exosome interaction.</title>
        <authorList>
            <person name="Wang J."/>
            <person name="Chen J."/>
            <person name="Wu G."/>
            <person name="Zhang H."/>
            <person name="Du X."/>
            <person name="Chen S."/>
            <person name="Zhang L."/>
            <person name="Wang K."/>
            <person name="Fan J."/>
            <person name="Gao S."/>
            <person name="Wu X."/>
            <person name="Zhang S."/>
            <person name="Kuai B."/>
            <person name="Zhao P."/>
            <person name="Chi B."/>
            <person name="Wang L."/>
            <person name="Li G."/>
            <person name="Wong C.C.L."/>
            <person name="Zhou Y."/>
            <person name="Li J."/>
            <person name="Yun C."/>
            <person name="Cheng H."/>
        </authorList>
    </citation>
    <scope>X-RAY CRYSTALLOGRAPHY (2.89 ANGSTROMS) OF 163-266 IN COMPLEX WITH MTREX</scope>
    <scope>FUNCTION</scope>
    <scope>INTERACTION WITH MTREX</scope>
    <scope>SUBCELLULAR LOCATION</scope>
    <scope>DOMAIN</scope>
    <scope>MUTAGENESIS OF PHE-163; ASP-166; TYR-187 AND ARG-189</scope>
</reference>
<accession>Q9H7Z3</accession>
<accession>B4DH71</accession>
<accession>Q4G0A7</accession>
<accession>Q9NWH6</accession>